<organism>
    <name type="scientific">Pseudarthrobacter chlorophenolicus (strain ATCC 700700 / DSM 12829 / CIP 107037 / JCM 12360 / KCTC 9906 / NCIMB 13794 / A6)</name>
    <name type="common">Arthrobacter chlorophenolicus</name>
    <dbReference type="NCBI Taxonomy" id="452863"/>
    <lineage>
        <taxon>Bacteria</taxon>
        <taxon>Bacillati</taxon>
        <taxon>Actinomycetota</taxon>
        <taxon>Actinomycetes</taxon>
        <taxon>Micrococcales</taxon>
        <taxon>Micrococcaceae</taxon>
        <taxon>Pseudarthrobacter</taxon>
    </lineage>
</organism>
<proteinExistence type="inferred from homology"/>
<sequence>MSRAVGIDLGTTNSVVSVLEGGEPTVIANAEGGRTTPSVVAFSKSGEVLVGEIAKRQAVNNIDRTIASVKRHMGTDWKVDIDGKKYTAQEISARTLMKLKNDAESYLGEKVTDAVITVPAYFNDAERQATKEAGEIAGLNVLRIVNEPTAAALAYGLDKGKEDELILVFDLGGGTFDVSLLEVGKDEDNFSTIQVRATAGDNRLGGDDWDQRVVDYLLNQLKVKGIDLSKDKIALQRLREAAEQAKKELSSSSSTNVSLQYLSVTPDGPVHLDEQLTRAKFQDLTKDLLERTKKPFHDVIKEAGIKLSDINHIVLVGGSTRMPAVSELVKELAGGKEPNKGVNPDEVVAVGAALQAGVLKGERKDVLLIDVTPLSLGIETKGGVMTHLIERNTAIPTKRSETFTTADDNQPSVAIQVFQGEREFTRDNKPLGTFELTGIAPAPRGVPQVEVTFDIDANGIVHVSAKDKGTGKEQSMTITGGTALSKEDIDRMVKDAEEHAAEDKARREATDTRNSAEQLAYSVDKLIADNADKLPEEVKTEVQADVDALKKALEGTDDAEVKTAFEKLQASQTKLGEAIYSQAGSPDGATGAAGAEGAAAGDGSKADEDIVDAEIIDEDEAKK</sequence>
<reference key="1">
    <citation type="submission" date="2009-01" db="EMBL/GenBank/DDBJ databases">
        <title>Complete sequence of chromosome of Arthrobacter chlorophenolicus A6.</title>
        <authorList>
            <consortium name="US DOE Joint Genome Institute"/>
            <person name="Lucas S."/>
            <person name="Copeland A."/>
            <person name="Lapidus A."/>
            <person name="Glavina del Rio T."/>
            <person name="Tice H."/>
            <person name="Bruce D."/>
            <person name="Goodwin L."/>
            <person name="Pitluck S."/>
            <person name="Goltsman E."/>
            <person name="Clum A."/>
            <person name="Larimer F."/>
            <person name="Land M."/>
            <person name="Hauser L."/>
            <person name="Kyrpides N."/>
            <person name="Mikhailova N."/>
            <person name="Jansson J."/>
            <person name="Richardson P."/>
        </authorList>
    </citation>
    <scope>NUCLEOTIDE SEQUENCE [LARGE SCALE GENOMIC DNA]</scope>
    <source>
        <strain>ATCC 700700 / DSM 12829 / CIP 107037 / JCM 12360 / KCTC 9906 / NCIMB 13794 / A6</strain>
    </source>
</reference>
<evidence type="ECO:0000255" key="1">
    <source>
        <dbReference type="HAMAP-Rule" id="MF_00332"/>
    </source>
</evidence>
<evidence type="ECO:0000256" key="2">
    <source>
        <dbReference type="SAM" id="MobiDB-lite"/>
    </source>
</evidence>
<dbReference type="EMBL" id="CP001341">
    <property type="protein sequence ID" value="ACL41577.1"/>
    <property type="molecule type" value="Genomic_DNA"/>
</dbReference>
<dbReference type="RefSeq" id="WP_015938771.1">
    <property type="nucleotide sequence ID" value="NC_011886.1"/>
</dbReference>
<dbReference type="SMR" id="B8H6Q1"/>
<dbReference type="STRING" id="452863.Achl_3621"/>
<dbReference type="KEGG" id="ach:Achl_3621"/>
<dbReference type="eggNOG" id="COG0443">
    <property type="taxonomic scope" value="Bacteria"/>
</dbReference>
<dbReference type="HOGENOM" id="CLU_005965_2_4_11"/>
<dbReference type="OrthoDB" id="9766019at2"/>
<dbReference type="Proteomes" id="UP000002505">
    <property type="component" value="Chromosome"/>
</dbReference>
<dbReference type="GO" id="GO:0005524">
    <property type="term" value="F:ATP binding"/>
    <property type="evidence" value="ECO:0007669"/>
    <property type="project" value="UniProtKB-UniRule"/>
</dbReference>
<dbReference type="GO" id="GO:0140662">
    <property type="term" value="F:ATP-dependent protein folding chaperone"/>
    <property type="evidence" value="ECO:0007669"/>
    <property type="project" value="InterPro"/>
</dbReference>
<dbReference type="GO" id="GO:0051082">
    <property type="term" value="F:unfolded protein binding"/>
    <property type="evidence" value="ECO:0007669"/>
    <property type="project" value="InterPro"/>
</dbReference>
<dbReference type="CDD" id="cd10234">
    <property type="entry name" value="ASKHA_NBD_HSP70_DnaK-like"/>
    <property type="match status" value="1"/>
</dbReference>
<dbReference type="FunFam" id="2.60.34.10:FF:000014">
    <property type="entry name" value="Chaperone protein DnaK HSP70"/>
    <property type="match status" value="1"/>
</dbReference>
<dbReference type="FunFam" id="1.20.1270.10:FF:000001">
    <property type="entry name" value="Molecular chaperone DnaK"/>
    <property type="match status" value="1"/>
</dbReference>
<dbReference type="FunFam" id="3.30.420.40:FF:000071">
    <property type="entry name" value="Molecular chaperone DnaK"/>
    <property type="match status" value="1"/>
</dbReference>
<dbReference type="FunFam" id="3.90.640.10:FF:000003">
    <property type="entry name" value="Molecular chaperone DnaK"/>
    <property type="match status" value="1"/>
</dbReference>
<dbReference type="Gene3D" id="1.20.1270.10">
    <property type="match status" value="1"/>
</dbReference>
<dbReference type="Gene3D" id="3.30.420.40">
    <property type="match status" value="2"/>
</dbReference>
<dbReference type="Gene3D" id="3.90.640.10">
    <property type="entry name" value="Actin, Chain A, domain 4"/>
    <property type="match status" value="1"/>
</dbReference>
<dbReference type="Gene3D" id="2.60.34.10">
    <property type="entry name" value="Substrate Binding Domain Of DNAk, Chain A, domain 1"/>
    <property type="match status" value="1"/>
</dbReference>
<dbReference type="HAMAP" id="MF_00332">
    <property type="entry name" value="DnaK"/>
    <property type="match status" value="1"/>
</dbReference>
<dbReference type="InterPro" id="IPR043129">
    <property type="entry name" value="ATPase_NBD"/>
</dbReference>
<dbReference type="InterPro" id="IPR012725">
    <property type="entry name" value="Chaperone_DnaK"/>
</dbReference>
<dbReference type="InterPro" id="IPR018181">
    <property type="entry name" value="Heat_shock_70_CS"/>
</dbReference>
<dbReference type="InterPro" id="IPR029048">
    <property type="entry name" value="HSP70_C_sf"/>
</dbReference>
<dbReference type="InterPro" id="IPR029047">
    <property type="entry name" value="HSP70_peptide-bd_sf"/>
</dbReference>
<dbReference type="InterPro" id="IPR013126">
    <property type="entry name" value="Hsp_70_fam"/>
</dbReference>
<dbReference type="NCBIfam" id="NF001413">
    <property type="entry name" value="PRK00290.1"/>
    <property type="match status" value="1"/>
</dbReference>
<dbReference type="NCBIfam" id="TIGR02350">
    <property type="entry name" value="prok_dnaK"/>
    <property type="match status" value="1"/>
</dbReference>
<dbReference type="PANTHER" id="PTHR19375">
    <property type="entry name" value="HEAT SHOCK PROTEIN 70KDA"/>
    <property type="match status" value="1"/>
</dbReference>
<dbReference type="Pfam" id="PF00012">
    <property type="entry name" value="HSP70"/>
    <property type="match status" value="1"/>
</dbReference>
<dbReference type="PRINTS" id="PR00301">
    <property type="entry name" value="HEATSHOCK70"/>
</dbReference>
<dbReference type="SUPFAM" id="SSF53067">
    <property type="entry name" value="Actin-like ATPase domain"/>
    <property type="match status" value="2"/>
</dbReference>
<dbReference type="SUPFAM" id="SSF100934">
    <property type="entry name" value="Heat shock protein 70kD (HSP70), C-terminal subdomain"/>
    <property type="match status" value="1"/>
</dbReference>
<dbReference type="SUPFAM" id="SSF100920">
    <property type="entry name" value="Heat shock protein 70kD (HSP70), peptide-binding domain"/>
    <property type="match status" value="1"/>
</dbReference>
<dbReference type="PROSITE" id="PS00297">
    <property type="entry name" value="HSP70_1"/>
    <property type="match status" value="1"/>
</dbReference>
<dbReference type="PROSITE" id="PS00329">
    <property type="entry name" value="HSP70_2"/>
    <property type="match status" value="1"/>
</dbReference>
<dbReference type="PROSITE" id="PS01036">
    <property type="entry name" value="HSP70_3"/>
    <property type="match status" value="1"/>
</dbReference>
<gene>
    <name evidence="1" type="primary">dnaK</name>
    <name type="ordered locus">Achl_3621</name>
</gene>
<keyword id="KW-0067">ATP-binding</keyword>
<keyword id="KW-0143">Chaperone</keyword>
<keyword id="KW-0547">Nucleotide-binding</keyword>
<keyword id="KW-0597">Phosphoprotein</keyword>
<keyword id="KW-0346">Stress response</keyword>
<feature type="chain" id="PRO_1000133127" description="Chaperone protein DnaK">
    <location>
        <begin position="1"/>
        <end position="623"/>
    </location>
</feature>
<feature type="region of interest" description="Disordered" evidence="2">
    <location>
        <begin position="496"/>
        <end position="515"/>
    </location>
</feature>
<feature type="region of interest" description="Disordered" evidence="2">
    <location>
        <begin position="579"/>
        <end position="609"/>
    </location>
</feature>
<feature type="compositionally biased region" description="Basic and acidic residues" evidence="2">
    <location>
        <begin position="496"/>
        <end position="511"/>
    </location>
</feature>
<feature type="compositionally biased region" description="Low complexity" evidence="2">
    <location>
        <begin position="587"/>
        <end position="603"/>
    </location>
</feature>
<feature type="modified residue" description="Phosphothreonine; by autocatalysis" evidence="1">
    <location>
        <position position="175"/>
    </location>
</feature>
<accession>B8H6Q1</accession>
<protein>
    <recommendedName>
        <fullName evidence="1">Chaperone protein DnaK</fullName>
    </recommendedName>
    <alternativeName>
        <fullName evidence="1">HSP70</fullName>
    </alternativeName>
    <alternativeName>
        <fullName evidence="1">Heat shock 70 kDa protein</fullName>
    </alternativeName>
    <alternativeName>
        <fullName evidence="1">Heat shock protein 70</fullName>
    </alternativeName>
</protein>
<comment type="function">
    <text evidence="1">Acts as a chaperone.</text>
</comment>
<comment type="induction">
    <text evidence="1">By stress conditions e.g. heat shock.</text>
</comment>
<comment type="similarity">
    <text evidence="1">Belongs to the heat shock protein 70 family.</text>
</comment>
<name>DNAK_PSECP</name>